<feature type="chain" id="PRO_0000351409" description="PTS system glucoside-specific EIICBA component">
    <location>
        <begin position="1"/>
        <end position="688"/>
    </location>
</feature>
<feature type="transmembrane region" description="Helical" evidence="4">
    <location>
        <begin position="12"/>
        <end position="32"/>
    </location>
</feature>
<feature type="transmembrane region" description="Helical" evidence="4">
    <location>
        <begin position="81"/>
        <end position="101"/>
    </location>
</feature>
<feature type="transmembrane region" description="Helical" evidence="4">
    <location>
        <begin position="137"/>
        <end position="157"/>
    </location>
</feature>
<feature type="transmembrane region" description="Helical" evidence="4">
    <location>
        <begin position="182"/>
        <end position="202"/>
    </location>
</feature>
<feature type="transmembrane region" description="Helical" evidence="4">
    <location>
        <begin position="223"/>
        <end position="243"/>
    </location>
</feature>
<feature type="transmembrane region" description="Helical" evidence="4">
    <location>
        <begin position="284"/>
        <end position="304"/>
    </location>
</feature>
<feature type="transmembrane region" description="Helical" evidence="4">
    <location>
        <begin position="315"/>
        <end position="335"/>
    </location>
</feature>
<feature type="transmembrane region" description="Helical" evidence="4">
    <location>
        <begin position="340"/>
        <end position="360"/>
    </location>
</feature>
<feature type="transmembrane region" description="Helical" evidence="4">
    <location>
        <begin position="364"/>
        <end position="384"/>
    </location>
</feature>
<feature type="transmembrane region" description="Helical" evidence="4">
    <location>
        <begin position="395"/>
        <end position="415"/>
    </location>
</feature>
<feature type="domain" description="PTS EIIC type-1" evidence="4">
    <location>
        <begin position="3"/>
        <end position="427"/>
    </location>
</feature>
<feature type="domain" description="PTS EIIB type-1" evidence="3">
    <location>
        <begin position="438"/>
        <end position="519"/>
    </location>
</feature>
<feature type="domain" description="PTS EIIA type-1" evidence="2">
    <location>
        <begin position="560"/>
        <end position="664"/>
    </location>
</feature>
<feature type="active site" description="Phosphocysteine intermediate; for EIIB activity" evidence="3">
    <location>
        <position position="460"/>
    </location>
</feature>
<feature type="active site" description="Tele-phosphohistidine intermediate; for EIIA activity" evidence="2">
    <location>
        <position position="612"/>
    </location>
</feature>
<name>PTU3C_STAA8</name>
<reference key="1">
    <citation type="book" date="2006" name="Gram positive pathogens, 2nd edition">
        <title>The Staphylococcus aureus NCTC 8325 genome.</title>
        <editorList>
            <person name="Fischetti V."/>
            <person name="Novick R."/>
            <person name="Ferretti J."/>
            <person name="Portnoy D."/>
            <person name="Rood J."/>
        </editorList>
        <authorList>
            <person name="Gillaspy A.F."/>
            <person name="Worrell V."/>
            <person name="Orvis J."/>
            <person name="Roe B.A."/>
            <person name="Dyer D.W."/>
            <person name="Iandolo J.J."/>
        </authorList>
    </citation>
    <scope>NUCLEOTIDE SEQUENCE [LARGE SCALE GENOMIC DNA]</scope>
    <source>
        <strain>NCTC 8325 / PS 47</strain>
    </source>
</reference>
<protein>
    <recommendedName>
        <fullName>PTS system glucoside-specific EIICBA component</fullName>
    </recommendedName>
    <domain>
        <recommendedName>
            <fullName>Glucoside permease IIC component</fullName>
        </recommendedName>
        <alternativeName>
            <fullName>PTS system glucoside-specific EIIC component</fullName>
        </alternativeName>
    </domain>
    <domain>
        <recommendedName>
            <fullName>Glucoside-specific phosphotransferase enzyme IIB component</fullName>
            <ecNumber>2.7.1.-</ecNumber>
        </recommendedName>
        <alternativeName>
            <fullName>PTS system glucoside-specific EIIB component</fullName>
        </alternativeName>
    </domain>
    <domain>
        <recommendedName>
            <fullName>Glucoside-specific phosphotransferase enzyme IIA component</fullName>
        </recommendedName>
        <alternativeName>
            <fullName>PTS system glucoside-specific EIIA component</fullName>
        </alternativeName>
    </domain>
</protein>
<keyword id="KW-1003">Cell membrane</keyword>
<keyword id="KW-0418">Kinase</keyword>
<keyword id="KW-0472">Membrane</keyword>
<keyword id="KW-0598">Phosphotransferase system</keyword>
<keyword id="KW-1185">Reference proteome</keyword>
<keyword id="KW-0762">Sugar transport</keyword>
<keyword id="KW-0808">Transferase</keyword>
<keyword id="KW-0812">Transmembrane</keyword>
<keyword id="KW-1133">Transmembrane helix</keyword>
<keyword id="KW-0813">Transport</keyword>
<accession>Q2FV87</accession>
<dbReference type="EC" id="2.7.1.-"/>
<dbReference type="EMBL" id="CP000253">
    <property type="protein sequence ID" value="ABD31848.1"/>
    <property type="molecule type" value="Genomic_DNA"/>
</dbReference>
<dbReference type="RefSeq" id="YP_501305.1">
    <property type="nucleotide sequence ID" value="NC_007795.1"/>
</dbReference>
<dbReference type="SMR" id="Q2FV87"/>
<dbReference type="STRING" id="93061.SAOUHSC_02848"/>
<dbReference type="PaxDb" id="1280-SAXN108_2787"/>
<dbReference type="GeneID" id="3921521"/>
<dbReference type="KEGG" id="sao:SAOUHSC_02848"/>
<dbReference type="PATRIC" id="fig|93061.5.peg.2576"/>
<dbReference type="eggNOG" id="COG1263">
    <property type="taxonomic scope" value="Bacteria"/>
</dbReference>
<dbReference type="eggNOG" id="COG1264">
    <property type="taxonomic scope" value="Bacteria"/>
</dbReference>
<dbReference type="eggNOG" id="COG2190">
    <property type="taxonomic scope" value="Bacteria"/>
</dbReference>
<dbReference type="HOGENOM" id="CLU_012312_1_1_9"/>
<dbReference type="OrthoDB" id="9764327at2"/>
<dbReference type="PRO" id="PR:Q2FV87"/>
<dbReference type="Proteomes" id="UP000008816">
    <property type="component" value="Chromosome"/>
</dbReference>
<dbReference type="GO" id="GO:0005886">
    <property type="term" value="C:plasma membrane"/>
    <property type="evidence" value="ECO:0000318"/>
    <property type="project" value="GO_Central"/>
</dbReference>
<dbReference type="GO" id="GO:0055056">
    <property type="term" value="F:D-glucose transmembrane transporter activity"/>
    <property type="evidence" value="ECO:0007669"/>
    <property type="project" value="InterPro"/>
</dbReference>
<dbReference type="GO" id="GO:0016301">
    <property type="term" value="F:kinase activity"/>
    <property type="evidence" value="ECO:0007669"/>
    <property type="project" value="UniProtKB-KW"/>
</dbReference>
<dbReference type="GO" id="GO:0008982">
    <property type="term" value="F:protein-N(PI)-phosphohistidine-sugar phosphotransferase activity"/>
    <property type="evidence" value="ECO:0007669"/>
    <property type="project" value="InterPro"/>
</dbReference>
<dbReference type="GO" id="GO:0090563">
    <property type="term" value="F:protein-phosphocysteine-sugar phosphotransferase activity"/>
    <property type="evidence" value="ECO:0000318"/>
    <property type="project" value="GO_Central"/>
</dbReference>
<dbReference type="GO" id="GO:1904659">
    <property type="term" value="P:D-glucose transmembrane transport"/>
    <property type="evidence" value="ECO:0007669"/>
    <property type="project" value="InterPro"/>
</dbReference>
<dbReference type="GO" id="GO:0009401">
    <property type="term" value="P:phosphoenolpyruvate-dependent sugar phosphotransferase system"/>
    <property type="evidence" value="ECO:0000318"/>
    <property type="project" value="GO_Central"/>
</dbReference>
<dbReference type="CDD" id="cd00212">
    <property type="entry name" value="PTS_IIB_glc"/>
    <property type="match status" value="1"/>
</dbReference>
<dbReference type="FunFam" id="2.70.70.10:FF:000001">
    <property type="entry name" value="PTS system glucose-specific IIA component"/>
    <property type="match status" value="1"/>
</dbReference>
<dbReference type="FunFam" id="3.30.1360.60:FF:000001">
    <property type="entry name" value="PTS system glucose-specific IIBC component PtsG"/>
    <property type="match status" value="1"/>
</dbReference>
<dbReference type="Gene3D" id="2.70.70.10">
    <property type="entry name" value="Glucose Permease (Domain IIA)"/>
    <property type="match status" value="1"/>
</dbReference>
<dbReference type="Gene3D" id="3.30.1360.60">
    <property type="entry name" value="Glucose permease domain IIB"/>
    <property type="match status" value="1"/>
</dbReference>
<dbReference type="InterPro" id="IPR011055">
    <property type="entry name" value="Dup_hybrid_motif"/>
</dbReference>
<dbReference type="InterPro" id="IPR036878">
    <property type="entry name" value="Glu_permease_IIB"/>
</dbReference>
<dbReference type="InterPro" id="IPR018113">
    <property type="entry name" value="PTrfase_EIIB_Cys"/>
</dbReference>
<dbReference type="InterPro" id="IPR001127">
    <property type="entry name" value="PTS_EIIA_1_perm"/>
</dbReference>
<dbReference type="InterPro" id="IPR003352">
    <property type="entry name" value="PTS_EIIC"/>
</dbReference>
<dbReference type="InterPro" id="IPR013013">
    <property type="entry name" value="PTS_EIIC_1"/>
</dbReference>
<dbReference type="InterPro" id="IPR050429">
    <property type="entry name" value="PTS_Glucose_EIICBA"/>
</dbReference>
<dbReference type="InterPro" id="IPR001996">
    <property type="entry name" value="PTS_IIB_1"/>
</dbReference>
<dbReference type="InterPro" id="IPR011299">
    <property type="entry name" value="PTS_IIBC_glc"/>
</dbReference>
<dbReference type="NCBIfam" id="TIGR00826">
    <property type="entry name" value="EIIB_glc"/>
    <property type="match status" value="1"/>
</dbReference>
<dbReference type="NCBIfam" id="TIGR00830">
    <property type="entry name" value="PTBA"/>
    <property type="match status" value="1"/>
</dbReference>
<dbReference type="NCBIfam" id="TIGR02002">
    <property type="entry name" value="PTS-II-BC-glcB"/>
    <property type="match status" value="1"/>
</dbReference>
<dbReference type="PANTHER" id="PTHR30009">
    <property type="entry name" value="CYTOCHROME C-TYPE SYNTHESIS PROTEIN AND PTS TRANSMEMBRANE COMPONENT"/>
    <property type="match status" value="1"/>
</dbReference>
<dbReference type="PANTHER" id="PTHR30009:SF20">
    <property type="entry name" value="PTS SYSTEM GLUCOSE-SPECIFIC EIICB COMPONENT-RELATED"/>
    <property type="match status" value="1"/>
</dbReference>
<dbReference type="Pfam" id="PF00358">
    <property type="entry name" value="PTS_EIIA_1"/>
    <property type="match status" value="1"/>
</dbReference>
<dbReference type="Pfam" id="PF00367">
    <property type="entry name" value="PTS_EIIB"/>
    <property type="match status" value="1"/>
</dbReference>
<dbReference type="Pfam" id="PF02378">
    <property type="entry name" value="PTS_EIIC"/>
    <property type="match status" value="1"/>
</dbReference>
<dbReference type="SUPFAM" id="SSF51261">
    <property type="entry name" value="Duplicated hybrid motif"/>
    <property type="match status" value="1"/>
</dbReference>
<dbReference type="SUPFAM" id="SSF55604">
    <property type="entry name" value="Glucose permease domain IIB"/>
    <property type="match status" value="1"/>
</dbReference>
<dbReference type="PROSITE" id="PS51093">
    <property type="entry name" value="PTS_EIIA_TYPE_1"/>
    <property type="match status" value="1"/>
</dbReference>
<dbReference type="PROSITE" id="PS00371">
    <property type="entry name" value="PTS_EIIA_TYPE_1_HIS"/>
    <property type="match status" value="1"/>
</dbReference>
<dbReference type="PROSITE" id="PS51098">
    <property type="entry name" value="PTS_EIIB_TYPE_1"/>
    <property type="match status" value="1"/>
</dbReference>
<dbReference type="PROSITE" id="PS01035">
    <property type="entry name" value="PTS_EIIB_TYPE_1_CYS"/>
    <property type="match status" value="1"/>
</dbReference>
<dbReference type="PROSITE" id="PS51103">
    <property type="entry name" value="PTS_EIIC_TYPE_1"/>
    <property type="match status" value="1"/>
</dbReference>
<sequence length="688" mass="74416">MFKKLFGQLQRIGKALMLPVAILPAAGILLAFGNAMHNEQLVEIAPWLKNDIIVMISSVMEAAGQVVFDNLPLLFAVGTALGLAGGDGVAALAALVGYLIMNATMGKVLHITIDDIFSYAKGAKELSQAAKEPAHALVLGIPTLQTGVFGGIIMGALAAWCYNKFYNITLPPFLGFFAGKRFVPIVTSVVAIATGVLLSFAWPPIQDGLNSLSNFLLNKNLTLTTFIFGIIERSLIPFGLHHIFYSPFWFEFGSYTNHAGELVRGDQRIWMAQLKDGVPFTAGAFTTGKYPFMMFGLPAAAFAIYKNARPERKKVVGGLMLSAGLTAFLTGITEPLEFSFLFVAPVLYGIHVLLAGTSFLVMHLLGVKIGMTFSGGFIDYILYGLLNWDRSHALLVIPVGIVYAIVYYFLFDFAIRKFKLKTPGREDEETEIRNSSVAKLPFDVLDAMGGKENIKHLDACITRLRVEVVDKSKVDVAGIKALGASGVLEVGNNMQAIFGPKSDQIKHDMAKIMSGEITKPSETTVTEEMSDEPVHVEALGTTDIYAPGIGQIIPLSEVPDQVFAGKMMGDGVGFIPEKGEIVAPFDGTVKTIFPTKHAIGLESESGVEVLIHIGIDTVKLNGEGFESLINVDEKVTQGQPLMKVNLAYLKAHAPSIVTPMIITNLENKELVIEDVQDADPGKLIMTVK</sequence>
<organism>
    <name type="scientific">Staphylococcus aureus (strain NCTC 8325 / PS 47)</name>
    <dbReference type="NCBI Taxonomy" id="93061"/>
    <lineage>
        <taxon>Bacteria</taxon>
        <taxon>Bacillati</taxon>
        <taxon>Bacillota</taxon>
        <taxon>Bacilli</taxon>
        <taxon>Bacillales</taxon>
        <taxon>Staphylococcaceae</taxon>
        <taxon>Staphylococcus</taxon>
    </lineage>
</organism>
<comment type="function">
    <text evidence="1">The phosphoenolpyruvate-dependent sugar phosphotransferase system (sugar PTS), a major carbohydrate active -transport system, catalyzes the phosphorylation of incoming sugar substrates concomitantly with their translocation across the cell membrane. This system is involved in alpha- and beta-glucoside transport (By similarity).</text>
</comment>
<comment type="subcellular location">
    <subcellularLocation>
        <location evidence="4">Cell membrane</location>
        <topology evidence="4">Multi-pass membrane protein</topology>
    </subcellularLocation>
</comment>
<comment type="domain">
    <text>The EIIC domain forms the PTS system translocation channel and contains the specific substrate-binding site.</text>
</comment>
<comment type="domain">
    <text>The EIIB domain is phosphorylated by phospho-EIIA on a cysteinyl or histidyl residue, depending on the transported sugar. Then, it transfers the phosphoryl group to the sugar substrate concomitantly with the sugar uptake processed by the EIIC domain.</text>
</comment>
<comment type="domain">
    <text>The EIIA domain is phosphorylated by phospho-HPr on a histidyl residue. Then, it transfers the phosphoryl group to the EIIB domain.</text>
</comment>
<evidence type="ECO:0000250" key="1"/>
<evidence type="ECO:0000255" key="2">
    <source>
        <dbReference type="PROSITE-ProRule" id="PRU00416"/>
    </source>
</evidence>
<evidence type="ECO:0000255" key="3">
    <source>
        <dbReference type="PROSITE-ProRule" id="PRU00421"/>
    </source>
</evidence>
<evidence type="ECO:0000255" key="4">
    <source>
        <dbReference type="PROSITE-ProRule" id="PRU00426"/>
    </source>
</evidence>
<gene>
    <name type="primary">glcB</name>
    <name type="ordered locus">SAOUHSC_02848</name>
</gene>
<proteinExistence type="inferred from homology"/>